<gene>
    <name type="primary">sarU</name>
    <name type="synonym">sarH2</name>
    <name type="ordered locus">SAV2499</name>
</gene>
<name>SARU_STAAM</name>
<sequence>MDYQTFEKVNKFINVEAYIFFLTQELKQQYKLSLKELLILAYFYYKNEHSISLKEIIGDILYKQSDVVKNIKSLSKKGFINKSRNEADERRIFVSVTPIQRKKIACVINELDKIIKGFNKERDYIKYQWAPKYSKEFFILFMNIMYSKDFLKYRFNLTFLDLSILYVISSRKNEILNLKDLFESIRFMYPQIVRSVNRLNNKGMLIKERSLADERIVLIKINKIQYNTIKSIFTDTSKILKPRKFFF</sequence>
<feature type="chain" id="PRO_0000219604" description="HTH-type transcriptional regulator SarU">
    <location>
        <begin position="1"/>
        <end position="247"/>
    </location>
</feature>
<feature type="DNA-binding region" description="H-T-H motif" evidence="2">
    <location>
        <begin position="53"/>
        <end position="76"/>
    </location>
</feature>
<feature type="DNA-binding region" description="H-T-H motif" evidence="2">
    <location>
        <begin position="178"/>
        <end position="201"/>
    </location>
</feature>
<evidence type="ECO:0000250" key="1"/>
<evidence type="ECO:0000255" key="2"/>
<evidence type="ECO:0000305" key="3"/>
<proteinExistence type="inferred from homology"/>
<protein>
    <recommendedName>
        <fullName>HTH-type transcriptional regulator SarU</fullName>
    </recommendedName>
    <alternativeName>
        <fullName>Staphylococcal accessory regulator U</fullName>
    </alternativeName>
</protein>
<dbReference type="EMBL" id="BA000017">
    <property type="protein sequence ID" value="BAB58661.1"/>
    <property type="molecule type" value="Genomic_DNA"/>
</dbReference>
<dbReference type="RefSeq" id="WP_000386367.1">
    <property type="nucleotide sequence ID" value="NC_002758.2"/>
</dbReference>
<dbReference type="SMR" id="Q99RD5"/>
<dbReference type="KEGG" id="sav:SAV2499"/>
<dbReference type="HOGENOM" id="CLU_097164_0_0_9"/>
<dbReference type="PhylomeDB" id="Q99RD5"/>
<dbReference type="Proteomes" id="UP000002481">
    <property type="component" value="Chromosome"/>
</dbReference>
<dbReference type="GO" id="GO:0005737">
    <property type="term" value="C:cytoplasm"/>
    <property type="evidence" value="ECO:0007669"/>
    <property type="project" value="UniProtKB-SubCell"/>
</dbReference>
<dbReference type="GO" id="GO:0003677">
    <property type="term" value="F:DNA binding"/>
    <property type="evidence" value="ECO:0007669"/>
    <property type="project" value="UniProtKB-KW"/>
</dbReference>
<dbReference type="GO" id="GO:0003700">
    <property type="term" value="F:DNA-binding transcription factor activity"/>
    <property type="evidence" value="ECO:0007669"/>
    <property type="project" value="InterPro"/>
</dbReference>
<dbReference type="GO" id="GO:0006950">
    <property type="term" value="P:response to stress"/>
    <property type="evidence" value="ECO:0007669"/>
    <property type="project" value="TreeGrafter"/>
</dbReference>
<dbReference type="Gene3D" id="1.10.10.10">
    <property type="entry name" value="Winged helix-like DNA-binding domain superfamily/Winged helix DNA-binding domain"/>
    <property type="match status" value="2"/>
</dbReference>
<dbReference type="InterPro" id="IPR039422">
    <property type="entry name" value="MarR/SlyA-like"/>
</dbReference>
<dbReference type="InterPro" id="IPR010166">
    <property type="entry name" value="SarA/Rot_dom"/>
</dbReference>
<dbReference type="InterPro" id="IPR055166">
    <property type="entry name" value="Transc_reg_Sar_Rot_HTH"/>
</dbReference>
<dbReference type="InterPro" id="IPR036388">
    <property type="entry name" value="WH-like_DNA-bd_sf"/>
</dbReference>
<dbReference type="InterPro" id="IPR036390">
    <property type="entry name" value="WH_DNA-bd_sf"/>
</dbReference>
<dbReference type="NCBIfam" id="TIGR01889">
    <property type="entry name" value="Staph_reg_Sar"/>
    <property type="match status" value="2"/>
</dbReference>
<dbReference type="PANTHER" id="PTHR33164:SF5">
    <property type="entry name" value="ORGANIC HYDROPEROXIDE RESISTANCE TRANSCRIPTIONAL REGULATOR"/>
    <property type="match status" value="1"/>
</dbReference>
<dbReference type="PANTHER" id="PTHR33164">
    <property type="entry name" value="TRANSCRIPTIONAL REGULATOR, MARR FAMILY"/>
    <property type="match status" value="1"/>
</dbReference>
<dbReference type="Pfam" id="PF22381">
    <property type="entry name" value="Staph_reg_Sar_Rot"/>
    <property type="match status" value="2"/>
</dbReference>
<dbReference type="SUPFAM" id="SSF46785">
    <property type="entry name" value="Winged helix' DNA-binding domain"/>
    <property type="match status" value="2"/>
</dbReference>
<accession>Q99RD5</accession>
<reference key="1">
    <citation type="journal article" date="2001" name="Lancet">
        <title>Whole genome sequencing of meticillin-resistant Staphylococcus aureus.</title>
        <authorList>
            <person name="Kuroda M."/>
            <person name="Ohta T."/>
            <person name="Uchiyama I."/>
            <person name="Baba T."/>
            <person name="Yuzawa H."/>
            <person name="Kobayashi I."/>
            <person name="Cui L."/>
            <person name="Oguchi A."/>
            <person name="Aoki K."/>
            <person name="Nagai Y."/>
            <person name="Lian J.-Q."/>
            <person name="Ito T."/>
            <person name="Kanamori M."/>
            <person name="Matsumaru H."/>
            <person name="Maruyama A."/>
            <person name="Murakami H."/>
            <person name="Hosoyama A."/>
            <person name="Mizutani-Ui Y."/>
            <person name="Takahashi N.K."/>
            <person name="Sawano T."/>
            <person name="Inoue R."/>
            <person name="Kaito C."/>
            <person name="Sekimizu K."/>
            <person name="Hirakawa H."/>
            <person name="Kuhara S."/>
            <person name="Goto S."/>
            <person name="Yabuzaki J."/>
            <person name="Kanehisa M."/>
            <person name="Yamashita A."/>
            <person name="Oshima K."/>
            <person name="Furuya K."/>
            <person name="Yoshino C."/>
            <person name="Shiba T."/>
            <person name="Hattori M."/>
            <person name="Ogasawara N."/>
            <person name="Hayashi H."/>
            <person name="Hiramatsu K."/>
        </authorList>
    </citation>
    <scope>NUCLEOTIDE SEQUENCE [LARGE SCALE GENOMIC DNA]</scope>
    <source>
        <strain>Mu50 / ATCC 700699</strain>
    </source>
</reference>
<organism>
    <name type="scientific">Staphylococcus aureus (strain Mu50 / ATCC 700699)</name>
    <dbReference type="NCBI Taxonomy" id="158878"/>
    <lineage>
        <taxon>Bacteria</taxon>
        <taxon>Bacillati</taxon>
        <taxon>Bacillota</taxon>
        <taxon>Bacilli</taxon>
        <taxon>Bacillales</taxon>
        <taxon>Staphylococcaceae</taxon>
        <taxon>Staphylococcus</taxon>
    </lineage>
</organism>
<keyword id="KW-0010">Activator</keyword>
<keyword id="KW-0963">Cytoplasm</keyword>
<keyword id="KW-0238">DNA-binding</keyword>
<keyword id="KW-0677">Repeat</keyword>
<keyword id="KW-0804">Transcription</keyword>
<keyword id="KW-0805">Transcription regulation</keyword>
<keyword id="KW-0843">Virulence</keyword>
<comment type="function">
    <text evidence="1">Positive regulator of RNAII and RNAIII in a cell density-dependent manner. It can contribute to the expression of virulence genes controlled by agr. May also regulate target genes via an agr-independent pathway (By similarity).</text>
</comment>
<comment type="subcellular location">
    <subcellularLocation>
        <location evidence="1">Cytoplasm</location>
    </subcellularLocation>
</comment>
<comment type="similarity">
    <text evidence="3">Belongs to the SarA family.</text>
</comment>